<keyword id="KW-0025">Alternative splicing</keyword>
<keyword id="KW-0966">Cell projection</keyword>
<keyword id="KW-0969">Cilium</keyword>
<keyword id="KW-0963">Cytoplasm</keyword>
<keyword id="KW-0206">Cytoskeleton</keyword>
<keyword id="KW-0282">Flagellum</keyword>
<keyword id="KW-1185">Reference proteome</keyword>
<reference key="1">
    <citation type="journal article" date="2002" name="Gene Expr. Patterns">
        <title>A novel mRNA expressed along brain ventricles.</title>
        <authorList>
            <person name="Danielson P.E."/>
            <person name="Sautkulis L.N."/>
            <person name="Foye P.E."/>
            <person name="Hedlund P.B."/>
            <person name="Carson M.J."/>
        </authorList>
    </citation>
    <scope>NUCLEOTIDE SEQUENCE [MRNA] (ISOFORMS 1 AND 2)</scope>
    <scope>TISSUE SPECIFICITY</scope>
    <source>
        <strain>Sprague-Dawley</strain>
        <tissue>Brain</tissue>
    </source>
</reference>
<reference key="2">
    <citation type="journal article" date="2004" name="Genome Res.">
        <title>The status, quality, and expansion of the NIH full-length cDNA project: the Mammalian Gene Collection (MGC).</title>
        <authorList>
            <consortium name="The MGC Project Team"/>
        </authorList>
    </citation>
    <scope>NUCLEOTIDE SEQUENCE [LARGE SCALE MRNA] (ISOFORM 1)</scope>
    <source>
        <tissue>Testis</tissue>
    </source>
</reference>
<reference key="3">
    <citation type="journal article" date="2018" name="Mol. Neurobiol.">
        <title>Expression of a Novel Ciliary Protein, IIIG9, During the Differentiation and Maturation of Ependymal Cells.</title>
        <authorList>
            <person name="Cifuentes M."/>
            <person name="Baeza V."/>
            <person name="Arrabal P.M."/>
            <person name="Visser R."/>
            <person name="Grondona J.M."/>
            <person name="Saldivia N."/>
            <person name="Martinez F."/>
            <person name="Nualart F."/>
            <person name="Salazar K."/>
        </authorList>
    </citation>
    <scope>SUBCELLULAR LOCATION</scope>
    <scope>TISSUE SPECIFICITY</scope>
    <scope>DEVELOPMENTAL STAGE</scope>
</reference>
<comment type="subunit">
    <text evidence="1 2">Microtubule inner protein component of sperm flagellar doublet microtubules (By similarity). Interacts with PPP1CA (By similarity).</text>
</comment>
<comment type="subcellular location">
    <subcellularLocation>
        <location evidence="5">Cell projection</location>
        <location evidence="5">Cilium</location>
    </subcellularLocation>
    <subcellularLocation>
        <location evidence="5">Cytoplasm</location>
    </subcellularLocation>
    <subcellularLocation>
        <location evidence="1">Cytoplasm</location>
        <location evidence="1">Cytoskeleton</location>
        <location evidence="1">Flagellum axoneme</location>
    </subcellularLocation>
    <text evidence="5">Localized to the cilia of polarized ependymal cells during development and at the adult stage. Preferentially locates between the peripheral microtubules of the axoneme and the ciliary membrane.</text>
</comment>
<comment type="alternative products">
    <event type="alternative splicing"/>
    <isoform>
        <id>Q66HR9-1</id>
        <name>1</name>
        <name>IIIG9L</name>
        <sequence type="displayed"/>
    </isoform>
    <isoform>
        <id>Q66HR9-2</id>
        <name>2</name>
        <name>IIIG9S</name>
        <sequence type="described" ref="VSP_022732"/>
    </isoform>
</comment>
<comment type="tissue specificity">
    <text evidence="4 5">Expressed in brain, ovaries and testis (PubMed:15018803). Expressed in the tracheal epithelium and in secondary spermatocytes and spermatids present in the seminiferous tubule (PubMed:28194645). Expressed in ependymal cells lining the ventricular walls of the brain (PubMed:28194645).</text>
</comment>
<comment type="developmental stage">
    <text evidence="5">At 17 dpc expressed in cells of the ventricular wall in the lateral and third ventricle and to cells in the neuronal parenchyma. At PN1, mainly expressed in the walls of the lateral and third ventricles with an apical polarization.</text>
</comment>
<gene>
    <name evidence="2" type="primary">Saxo4</name>
    <name evidence="6" type="synonym">Iiig9</name>
    <name evidence="8" type="synonym">Ppp1r32</name>
</gene>
<organism>
    <name type="scientific">Rattus norvegicus</name>
    <name type="common">Rat</name>
    <dbReference type="NCBI Taxonomy" id="10116"/>
    <lineage>
        <taxon>Eukaryota</taxon>
        <taxon>Metazoa</taxon>
        <taxon>Chordata</taxon>
        <taxon>Craniata</taxon>
        <taxon>Vertebrata</taxon>
        <taxon>Euteleostomi</taxon>
        <taxon>Mammalia</taxon>
        <taxon>Eutheria</taxon>
        <taxon>Euarchontoglires</taxon>
        <taxon>Glires</taxon>
        <taxon>Rodentia</taxon>
        <taxon>Myomorpha</taxon>
        <taxon>Muroidea</taxon>
        <taxon>Muridae</taxon>
        <taxon>Murinae</taxon>
        <taxon>Rattus</taxon>
    </lineage>
</organism>
<name>SAXO4_RAT</name>
<protein>
    <recommendedName>
        <fullName evidence="2">Stabilizer of axonemal microtubules 4</fullName>
    </recommendedName>
    <alternativeName>
        <fullName evidence="6">Protein IIIG9</fullName>
    </alternativeName>
    <alternativeName>
        <fullName evidence="8">Protein phosphatase 1 regulatory subunit 32</fullName>
    </alternativeName>
</protein>
<accession>Q66HR9</accession>
<accession>Q91XJ3</accession>
<accession>Q91XJ4</accession>
<evidence type="ECO:0000250" key="1">
    <source>
        <dbReference type="UniProtKB" id="Q148A4"/>
    </source>
</evidence>
<evidence type="ECO:0000250" key="2">
    <source>
        <dbReference type="UniProtKB" id="Q7Z5V6"/>
    </source>
</evidence>
<evidence type="ECO:0000256" key="3">
    <source>
        <dbReference type="SAM" id="MobiDB-lite"/>
    </source>
</evidence>
<evidence type="ECO:0000269" key="4">
    <source>
    </source>
</evidence>
<evidence type="ECO:0000269" key="5">
    <source>
    </source>
</evidence>
<evidence type="ECO:0000303" key="6">
    <source>
    </source>
</evidence>
<evidence type="ECO:0000305" key="7"/>
<evidence type="ECO:0000312" key="8">
    <source>
        <dbReference type="RGD" id="708532"/>
    </source>
</evidence>
<feature type="chain" id="PRO_0000274379" description="Stabilizer of axonemal microtubules 4">
    <location>
        <begin position="1"/>
        <end position="425"/>
    </location>
</feature>
<feature type="region of interest" description="Disordered" evidence="3">
    <location>
        <begin position="259"/>
        <end position="297"/>
    </location>
</feature>
<feature type="region of interest" description="Disordered" evidence="3">
    <location>
        <begin position="315"/>
        <end position="335"/>
    </location>
</feature>
<feature type="compositionally biased region" description="Basic and acidic residues" evidence="3">
    <location>
        <begin position="260"/>
        <end position="272"/>
    </location>
</feature>
<feature type="compositionally biased region" description="Low complexity" evidence="3">
    <location>
        <begin position="277"/>
        <end position="290"/>
    </location>
</feature>
<feature type="compositionally biased region" description="Polar residues" evidence="3">
    <location>
        <begin position="321"/>
        <end position="332"/>
    </location>
</feature>
<feature type="splice variant" id="VSP_022732" description="In isoform 2." evidence="6">
    <location>
        <begin position="1"/>
        <end position="44"/>
    </location>
</feature>
<feature type="sequence conflict" description="In Ref. 1; AAK56501." evidence="7" ref="1">
    <original>S</original>
    <variation>C</variation>
    <location>
        <position position="31"/>
    </location>
</feature>
<dbReference type="EMBL" id="AY032664">
    <property type="protein sequence ID" value="AAK56500.1"/>
    <property type="molecule type" value="mRNA"/>
</dbReference>
<dbReference type="EMBL" id="AY032665">
    <property type="protein sequence ID" value="AAK56501.1"/>
    <property type="molecule type" value="mRNA"/>
</dbReference>
<dbReference type="EMBL" id="BC081718">
    <property type="protein sequence ID" value="AAH81718.1"/>
    <property type="molecule type" value="mRNA"/>
</dbReference>
<dbReference type="RefSeq" id="NP_665729.1">
    <property type="nucleotide sequence ID" value="NM_145786.1"/>
</dbReference>
<dbReference type="RefSeq" id="XP_006231078.1">
    <molecule id="Q66HR9-2"/>
    <property type="nucleotide sequence ID" value="XM_006231016.5"/>
</dbReference>
<dbReference type="RefSeq" id="XP_008758438.1">
    <property type="nucleotide sequence ID" value="XM_008760216.2"/>
</dbReference>
<dbReference type="RefSeq" id="XP_017444309.1">
    <property type="nucleotide sequence ID" value="XM_017588820.1"/>
</dbReference>
<dbReference type="RefSeq" id="XP_063137730.1">
    <molecule id="Q66HR9-2"/>
    <property type="nucleotide sequence ID" value="XM_063281660.1"/>
</dbReference>
<dbReference type="SMR" id="Q66HR9"/>
<dbReference type="FunCoup" id="Q66HR9">
    <property type="interactions" value="51"/>
</dbReference>
<dbReference type="STRING" id="10116.ENSRNOP00000028003"/>
<dbReference type="GlyGen" id="Q66HR9">
    <property type="glycosylation" value="1 site"/>
</dbReference>
<dbReference type="iPTMnet" id="Q66HR9"/>
<dbReference type="PhosphoSitePlus" id="Q66HR9"/>
<dbReference type="PaxDb" id="10116-ENSRNOP00000028003"/>
<dbReference type="Ensembl" id="ENSRNOT00000028003.4">
    <molecule id="Q66HR9-1"/>
    <property type="protein sequence ID" value="ENSRNOP00000028003.2"/>
    <property type="gene ID" value="ENSRNOG00000020620.5"/>
</dbReference>
<dbReference type="GeneID" id="252958"/>
<dbReference type="KEGG" id="rno:252958"/>
<dbReference type="UCSC" id="RGD:708532">
    <molecule id="Q66HR9-1"/>
    <property type="organism name" value="rat"/>
</dbReference>
<dbReference type="AGR" id="RGD:708532"/>
<dbReference type="CTD" id="220004"/>
<dbReference type="RGD" id="708532">
    <property type="gene designation" value="Saxo4"/>
</dbReference>
<dbReference type="eggNOG" id="ENOG502QR8X">
    <property type="taxonomic scope" value="Eukaryota"/>
</dbReference>
<dbReference type="GeneTree" id="ENSGT00390000003127"/>
<dbReference type="HOGENOM" id="CLU_686162_0_0_1"/>
<dbReference type="InParanoid" id="Q66HR9"/>
<dbReference type="OMA" id="TTYNQRY"/>
<dbReference type="OrthoDB" id="9980630at2759"/>
<dbReference type="PhylomeDB" id="Q66HR9"/>
<dbReference type="TreeFam" id="TF328734"/>
<dbReference type="PRO" id="PR:Q66HR9"/>
<dbReference type="Proteomes" id="UP000002494">
    <property type="component" value="Chromosome 1"/>
</dbReference>
<dbReference type="Bgee" id="ENSRNOG00000020620">
    <property type="expression patterns" value="Expressed in testis and 10 other cell types or tissues"/>
</dbReference>
<dbReference type="GO" id="GO:0160111">
    <property type="term" value="C:axonemal A tubule inner sheath"/>
    <property type="evidence" value="ECO:0000250"/>
    <property type="project" value="UniProtKB"/>
</dbReference>
<dbReference type="GO" id="GO:0036064">
    <property type="term" value="C:ciliary basal body"/>
    <property type="evidence" value="ECO:0000266"/>
    <property type="project" value="RGD"/>
</dbReference>
<dbReference type="GO" id="GO:0005929">
    <property type="term" value="C:cilium"/>
    <property type="evidence" value="ECO:0000314"/>
    <property type="project" value="UniProtKB"/>
</dbReference>
<dbReference type="GO" id="GO:0005737">
    <property type="term" value="C:cytoplasm"/>
    <property type="evidence" value="ECO:0000314"/>
    <property type="project" value="UniProtKB"/>
</dbReference>
<dbReference type="GO" id="GO:0036126">
    <property type="term" value="C:sperm flagellum"/>
    <property type="evidence" value="ECO:0000250"/>
    <property type="project" value="UniProtKB"/>
</dbReference>
<dbReference type="GO" id="GO:0019902">
    <property type="term" value="F:phosphatase binding"/>
    <property type="evidence" value="ECO:0000250"/>
    <property type="project" value="UniProtKB"/>
</dbReference>
<dbReference type="GO" id="GO:0030317">
    <property type="term" value="P:flagellated sperm motility"/>
    <property type="evidence" value="ECO:0000250"/>
    <property type="project" value="UniProtKB"/>
</dbReference>
<dbReference type="InterPro" id="IPR031410">
    <property type="entry name" value="SAXO4"/>
</dbReference>
<dbReference type="PANTHER" id="PTHR34349">
    <property type="entry name" value="PROTEIN PHOSPHATASE 1 REGULATORY SUBUNIT 32"/>
    <property type="match status" value="1"/>
</dbReference>
<dbReference type="PANTHER" id="PTHR34349:SF1">
    <property type="entry name" value="PROTEIN PHOSPHATASE 1 REGULATORY SUBUNIT 32"/>
    <property type="match status" value="1"/>
</dbReference>
<dbReference type="Pfam" id="PF15691">
    <property type="entry name" value="PPP1R32"/>
    <property type="match status" value="1"/>
</dbReference>
<sequence>MMGKLPLGVVSPYVKMSSGGCSDPLKFYATSYCTAYGREEFKPRMGSHVGTGYKSNYRPLVSYQPHLDTLDNPAVGEQIHDTSKSVASQSYAPLEVPDGKQPLPWNLHQTTSGYGREKVNIGPLSKEVRKVHFDTQDHGPQTITGLEPKEVPLIHQQQGKGSTEWENSRYGPRFMTSEYNSKYLKESPNHPDLLLKKTIGSKEETGFTEESTKNPIVFQPPSQAYPGDPVLHPGRSITKSDYLPISHPQGNEFLPVLARGSDRDTGYSRVSERSLNPRMPTPSSQPTSMSHRSYQPPQRMQQSNVALLGRESVGNKEPTGFTLNNPSYVRSSYEQDRDQRYLTTYNQGYFENIPKGLDREGWTRGGIQPQKAGAYALSEPVTHMDTTPNPTETLRHLHPHVGRTLTSVDPFYRDVPHSNRYPTSS</sequence>
<proteinExistence type="evidence at transcript level"/>